<sequence>MPSFFRALFSGLIASQLSWAAPSLLHPLEPRQQPNCNTASNRACWISGSYDITTDYEVKTPLTGVVRQYDLTLTQAENWLGPDGVVKEDVMLVNGNILGPVIHAQWGDTISVTVTNNLKYNGTTIHWHGIRQLNTNLQDGVNGITECPIPPNGGSKTYTFIAHQYGTSWYHSHFSAQYGNGIVGAIQIDGPASLPYDIDLGPLVLSDYYYKTADELVVYTQSNAPPASDNVLFNGTNINPANTTQGQYKTITLTPGKRHRLRIINTSVENNFQVSIVGHSMTVIESDFVPVDSFTTDSLFVGIGQRYDVTIDASQATDNYWMNVTFGGGGFCGKSNNPYPAAIIHYNGASNSHPTNKGVAPADHECLDLLNLVPVVPRSIPTSGFVAASDNTLDVQLSTTTRKWTINGSTLDVDWGHPITQYVINKSTAWPSTDNVWLVEEANQWAYWLIENDPTATGNALPHPIHLHGHDFVVLGRSPNVSPTAQTPYTFTSSDVSSLNGNNPIRRDVVMLPPKGWLLIAFQTTNPGAWLMHCHIAWHVSAGLGNTFLEQPSAFVAGLNTNDVNQLNSQCKSWNAYYPSKDIFKQDDSGV</sequence>
<comment type="function">
    <text evidence="2">Lignin degradation and detoxification of lignin-derived products.</text>
</comment>
<comment type="catalytic activity">
    <reaction evidence="2">
        <text>4 hydroquinone + O2 = 4 benzosemiquinone + 2 H2O</text>
        <dbReference type="Rhea" id="RHEA:11276"/>
        <dbReference type="ChEBI" id="CHEBI:15377"/>
        <dbReference type="ChEBI" id="CHEBI:15379"/>
        <dbReference type="ChEBI" id="CHEBI:17594"/>
        <dbReference type="ChEBI" id="CHEBI:17977"/>
        <dbReference type="EC" id="1.10.3.2"/>
    </reaction>
</comment>
<comment type="cofactor">
    <cofactor evidence="2">
        <name>Cu cation</name>
        <dbReference type="ChEBI" id="CHEBI:23378"/>
    </cofactor>
    <text evidence="2">Binds 4 Cu cations per monomer.</text>
</comment>
<comment type="subcellular location">
    <subcellularLocation>
        <location evidence="2">Secreted</location>
    </subcellularLocation>
</comment>
<comment type="similarity">
    <text evidence="4">Belongs to the multicopper oxidase family.</text>
</comment>
<proteinExistence type="inferred from homology"/>
<protein>
    <recommendedName>
        <fullName>Laccase</fullName>
        <ecNumber evidence="2">1.10.3.2</ecNumber>
    </recommendedName>
    <alternativeName>
        <fullName>Benzenediol:oxygen oxidoreductase</fullName>
    </alternativeName>
    <alternativeName>
        <fullName>Diphenol oxidase</fullName>
    </alternativeName>
    <alternativeName>
        <fullName>Urishiol oxidase</fullName>
    </alternativeName>
</protein>
<reference key="1">
    <citation type="journal article" date="1992" name="Mol. Plant Microbe Interact.">
        <title>Molecular analysis of the laccase gene from the chestnut blight fungus and selective suppression of its expression in an isogenic hypovirulent strain.</title>
        <authorList>
            <person name="Choi G.H."/>
            <person name="Larson T.G."/>
            <person name="Nuss D.L."/>
        </authorList>
    </citation>
    <scope>NUCLEOTIDE SEQUENCE [GENOMIC DNA]</scope>
</reference>
<organism>
    <name type="scientific">Cryphonectria parasitica</name>
    <name type="common">Chestnut blight fungus</name>
    <name type="synonym">Endothia parasitica</name>
    <dbReference type="NCBI Taxonomy" id="5116"/>
    <lineage>
        <taxon>Eukaryota</taxon>
        <taxon>Fungi</taxon>
        <taxon>Dikarya</taxon>
        <taxon>Ascomycota</taxon>
        <taxon>Pezizomycotina</taxon>
        <taxon>Sordariomycetes</taxon>
        <taxon>Sordariomycetidae</taxon>
        <taxon>Diaporthales</taxon>
        <taxon>Cryphonectriaceae</taxon>
        <taxon>Cryphonectria-Endothia species complex</taxon>
        <taxon>Cryphonectria</taxon>
    </lineage>
</organism>
<gene>
    <name type="primary">LAC-1</name>
</gene>
<keyword id="KW-0186">Copper</keyword>
<keyword id="KW-1015">Disulfide bond</keyword>
<keyword id="KW-0325">Glycoprotein</keyword>
<keyword id="KW-0439">Lignin degradation</keyword>
<keyword id="KW-0479">Metal-binding</keyword>
<keyword id="KW-0560">Oxidoreductase</keyword>
<keyword id="KW-0677">Repeat</keyword>
<keyword id="KW-0964">Secreted</keyword>
<keyword id="KW-0732">Signal</keyword>
<accession>Q03966</accession>
<dbReference type="EC" id="1.10.3.2" evidence="2"/>
<dbReference type="EMBL" id="M73257">
    <property type="protein sequence ID" value="AAA33105.1"/>
    <property type="molecule type" value="Genomic_DNA"/>
</dbReference>
<dbReference type="EMBL" id="S38903">
    <property type="protein sequence ID" value="AAA09235.1"/>
    <property type="molecule type" value="Genomic_DNA"/>
</dbReference>
<dbReference type="SMR" id="Q03966"/>
<dbReference type="CAZy" id="AA1">
    <property type="family name" value="Auxiliary Activities 1"/>
</dbReference>
<dbReference type="GlyCosmos" id="Q03966">
    <property type="glycosylation" value="7 sites, No reported glycans"/>
</dbReference>
<dbReference type="OMA" id="HNGTGIH"/>
<dbReference type="GO" id="GO:0005576">
    <property type="term" value="C:extracellular region"/>
    <property type="evidence" value="ECO:0007669"/>
    <property type="project" value="UniProtKB-SubCell"/>
</dbReference>
<dbReference type="GO" id="GO:0005507">
    <property type="term" value="F:copper ion binding"/>
    <property type="evidence" value="ECO:0007669"/>
    <property type="project" value="InterPro"/>
</dbReference>
<dbReference type="GO" id="GO:0052716">
    <property type="term" value="F:hydroquinone:oxygen oxidoreductase activity"/>
    <property type="evidence" value="ECO:0007669"/>
    <property type="project" value="UniProtKB-EC"/>
</dbReference>
<dbReference type="GO" id="GO:0046274">
    <property type="term" value="P:lignin catabolic process"/>
    <property type="evidence" value="ECO:0007669"/>
    <property type="project" value="UniProtKB-KW"/>
</dbReference>
<dbReference type="CDD" id="cd13854">
    <property type="entry name" value="CuRO_1_MaLCC_like"/>
    <property type="match status" value="1"/>
</dbReference>
<dbReference type="CDD" id="cd13880">
    <property type="entry name" value="CuRO_2_MaLCC_like"/>
    <property type="match status" value="1"/>
</dbReference>
<dbReference type="CDD" id="cd13901">
    <property type="entry name" value="CuRO_3_MaLCC_like"/>
    <property type="match status" value="1"/>
</dbReference>
<dbReference type="FunFam" id="2.60.40.420:FF:000021">
    <property type="entry name" value="Extracellular dihydrogeodin oxidase/laccase"/>
    <property type="match status" value="1"/>
</dbReference>
<dbReference type="FunFam" id="2.60.40.420:FF:000045">
    <property type="entry name" value="Laccase 2"/>
    <property type="match status" value="1"/>
</dbReference>
<dbReference type="FunFam" id="2.60.40.420:FF:000046">
    <property type="entry name" value="Multicopper oxidase"/>
    <property type="match status" value="1"/>
</dbReference>
<dbReference type="Gene3D" id="2.60.40.420">
    <property type="entry name" value="Cupredoxins - blue copper proteins"/>
    <property type="match status" value="3"/>
</dbReference>
<dbReference type="InterPro" id="IPR011707">
    <property type="entry name" value="Cu-oxidase-like_N"/>
</dbReference>
<dbReference type="InterPro" id="IPR001117">
    <property type="entry name" value="Cu-oxidase_2nd"/>
</dbReference>
<dbReference type="InterPro" id="IPR011706">
    <property type="entry name" value="Cu-oxidase_C"/>
</dbReference>
<dbReference type="InterPro" id="IPR045087">
    <property type="entry name" value="Cu-oxidase_fam"/>
</dbReference>
<dbReference type="InterPro" id="IPR033138">
    <property type="entry name" value="Cu_oxidase_CS"/>
</dbReference>
<dbReference type="InterPro" id="IPR002355">
    <property type="entry name" value="Cu_oxidase_Cu_BS"/>
</dbReference>
<dbReference type="InterPro" id="IPR008972">
    <property type="entry name" value="Cupredoxin"/>
</dbReference>
<dbReference type="PANTHER" id="PTHR11709:SF87">
    <property type="entry name" value="LACCASE"/>
    <property type="match status" value="1"/>
</dbReference>
<dbReference type="PANTHER" id="PTHR11709">
    <property type="entry name" value="MULTI-COPPER OXIDASE"/>
    <property type="match status" value="1"/>
</dbReference>
<dbReference type="Pfam" id="PF00394">
    <property type="entry name" value="Cu-oxidase"/>
    <property type="match status" value="1"/>
</dbReference>
<dbReference type="Pfam" id="PF07731">
    <property type="entry name" value="Cu-oxidase_2"/>
    <property type="match status" value="1"/>
</dbReference>
<dbReference type="Pfam" id="PF07732">
    <property type="entry name" value="Cu-oxidase_3"/>
    <property type="match status" value="1"/>
</dbReference>
<dbReference type="SUPFAM" id="SSF49503">
    <property type="entry name" value="Cupredoxins"/>
    <property type="match status" value="3"/>
</dbReference>
<dbReference type="PROSITE" id="PS00079">
    <property type="entry name" value="MULTICOPPER_OXIDASE1"/>
    <property type="match status" value="1"/>
</dbReference>
<dbReference type="PROSITE" id="PS00080">
    <property type="entry name" value="MULTICOPPER_OXIDASE2"/>
    <property type="match status" value="1"/>
</dbReference>
<evidence type="ECO:0000250" key="1">
    <source>
        <dbReference type="UniProtKB" id="D0VWU3"/>
    </source>
</evidence>
<evidence type="ECO:0000250" key="2">
    <source>
        <dbReference type="UniProtKB" id="Q70KY3"/>
    </source>
</evidence>
<evidence type="ECO:0000255" key="3"/>
<evidence type="ECO:0000305" key="4"/>
<name>LAC1_CRYPA</name>
<feature type="signal peptide" evidence="3">
    <location>
        <begin position="1"/>
        <end position="20"/>
    </location>
</feature>
<feature type="chain" id="PRO_0000002920" description="Laccase">
    <location>
        <begin position="21"/>
        <end position="591"/>
    </location>
</feature>
<feature type="domain" description="Plastocyanin-like 1">
    <location>
        <begin position="66"/>
        <end position="189"/>
    </location>
</feature>
<feature type="domain" description="Plastocyanin-like 2">
    <location>
        <begin position="198"/>
        <end position="356"/>
    </location>
</feature>
<feature type="domain" description="Plastocyanin-like 3">
    <location>
        <begin position="416"/>
        <end position="551"/>
    </location>
</feature>
<feature type="binding site" description="type 2 copper site" evidence="1">
    <location>
        <position position="126"/>
    </location>
    <ligand>
        <name>Cu cation</name>
        <dbReference type="ChEBI" id="CHEBI:23378"/>
        <label>1</label>
    </ligand>
</feature>
<feature type="binding site" description="type 3 copper site" evidence="1">
    <location>
        <position position="128"/>
    </location>
    <ligand>
        <name>Cu cation</name>
        <dbReference type="ChEBI" id="CHEBI:23378"/>
        <label>2</label>
    </ligand>
</feature>
<feature type="binding site" description="type 3 copper site" evidence="1">
    <location>
        <position position="171"/>
    </location>
    <ligand>
        <name>Cu cation</name>
        <dbReference type="ChEBI" id="CHEBI:23378"/>
        <label>2</label>
    </ligand>
</feature>
<feature type="binding site" description="type 3 copper site" evidence="1">
    <location>
        <position position="173"/>
    </location>
    <ligand>
        <name>Cu cation</name>
        <dbReference type="ChEBI" id="CHEBI:23378"/>
        <label>3</label>
    </ligand>
</feature>
<feature type="binding site" description="type 1 copper site" evidence="1">
    <location>
        <position position="463"/>
    </location>
    <ligand>
        <name>Cu cation</name>
        <dbReference type="ChEBI" id="CHEBI:23378"/>
        <label>4</label>
    </ligand>
</feature>
<feature type="binding site" description="type 2 copper site" evidence="1">
    <location>
        <position position="466"/>
    </location>
    <ligand>
        <name>Cu cation</name>
        <dbReference type="ChEBI" id="CHEBI:23378"/>
        <label>1</label>
    </ligand>
</feature>
<feature type="binding site" description="type 3 copper site" evidence="1">
    <location>
        <position position="468"/>
    </location>
    <ligand>
        <name>Cu cation</name>
        <dbReference type="ChEBI" id="CHEBI:23378"/>
        <label>3</label>
    </ligand>
</feature>
<feature type="binding site" description="type 3 copper site" evidence="1">
    <location>
        <position position="533"/>
    </location>
    <ligand>
        <name>Cu cation</name>
        <dbReference type="ChEBI" id="CHEBI:23378"/>
        <label>3</label>
    </ligand>
</feature>
<feature type="binding site" description="type 1 copper site" evidence="1">
    <location>
        <position position="534"/>
    </location>
    <ligand>
        <name>Cu cation</name>
        <dbReference type="ChEBI" id="CHEBI:23378"/>
        <label>4</label>
    </ligand>
</feature>
<feature type="binding site" description="type 3 copper site" evidence="1">
    <location>
        <position position="535"/>
    </location>
    <ligand>
        <name>Cu cation</name>
        <dbReference type="ChEBI" id="CHEBI:23378"/>
        <label>2</label>
    </ligand>
</feature>
<feature type="binding site" description="type 1 copper site" evidence="1">
    <location>
        <position position="539"/>
    </location>
    <ligand>
        <name>Cu cation</name>
        <dbReference type="ChEBI" id="CHEBI:23378"/>
        <label>4</label>
    </ligand>
</feature>
<feature type="glycosylation site" description="N-linked (GlcNAc...) asparagine" evidence="3">
    <location>
        <position position="121"/>
    </location>
</feature>
<feature type="glycosylation site" description="N-linked (GlcNAc...) asparagine" evidence="3">
    <location>
        <position position="234"/>
    </location>
</feature>
<feature type="glycosylation site" description="N-linked (GlcNAc...) asparagine" evidence="3">
    <location>
        <position position="242"/>
    </location>
</feature>
<feature type="glycosylation site" description="N-linked (GlcNAc...) asparagine" evidence="3">
    <location>
        <position position="265"/>
    </location>
</feature>
<feature type="glycosylation site" description="N-linked (GlcNAc...) asparagine" evidence="3">
    <location>
        <position position="323"/>
    </location>
</feature>
<feature type="glycosylation site" description="N-linked (GlcNAc...) asparagine" evidence="3">
    <location>
        <position position="407"/>
    </location>
</feature>
<feature type="glycosylation site" description="N-linked (GlcNAc...) asparagine" evidence="3">
    <location>
        <position position="425"/>
    </location>
</feature>
<feature type="disulfide bond" evidence="2">
    <location>
        <begin position="147"/>
        <end position="571"/>
    </location>
</feature>
<feature type="disulfide bond" evidence="2">
    <location>
        <begin position="332"/>
        <end position="366"/>
    </location>
</feature>